<evidence type="ECO:0000255" key="1">
    <source>
        <dbReference type="HAMAP-Rule" id="MF_00412"/>
    </source>
</evidence>
<accession>Q5SH02</accession>
<keyword id="KW-0028">Amino-acid biosynthesis</keyword>
<keyword id="KW-0963">Cytoplasm</keyword>
<keyword id="KW-0521">NADP</keyword>
<keyword id="KW-0560">Oxidoreductase</keyword>
<keyword id="KW-0641">Proline biosynthesis</keyword>
<keyword id="KW-1185">Reference proteome</keyword>
<proteinExistence type="inferred from homology"/>
<protein>
    <recommendedName>
        <fullName evidence="1">Gamma-glutamyl phosphate reductase</fullName>
        <shortName evidence="1">GPR</shortName>
        <ecNumber evidence="1">1.2.1.41</ecNumber>
    </recommendedName>
    <alternativeName>
        <fullName evidence="1">Glutamate-5-semialdehyde dehydrogenase</fullName>
    </alternativeName>
    <alternativeName>
        <fullName evidence="1">Glutamyl-gamma-semialdehyde dehydrogenase</fullName>
        <shortName evidence="1">GSA dehydrogenase</shortName>
    </alternativeName>
</protein>
<name>PROA_THET8</name>
<dbReference type="EC" id="1.2.1.41" evidence="1"/>
<dbReference type="EMBL" id="AP008226">
    <property type="protein sequence ID" value="BAD71751.1"/>
    <property type="molecule type" value="Genomic_DNA"/>
</dbReference>
<dbReference type="RefSeq" id="WP_011229021.1">
    <property type="nucleotide sequence ID" value="NC_006461.1"/>
</dbReference>
<dbReference type="RefSeq" id="YP_145194.1">
    <property type="nucleotide sequence ID" value="NC_006461.1"/>
</dbReference>
<dbReference type="SMR" id="Q5SH02"/>
<dbReference type="EnsemblBacteria" id="BAD71751">
    <property type="protein sequence ID" value="BAD71751"/>
    <property type="gene ID" value="BAD71751"/>
</dbReference>
<dbReference type="GeneID" id="3169314"/>
<dbReference type="KEGG" id="ttj:TTHA1928"/>
<dbReference type="PATRIC" id="fig|300852.9.peg.1899"/>
<dbReference type="eggNOG" id="COG0014">
    <property type="taxonomic scope" value="Bacteria"/>
</dbReference>
<dbReference type="HOGENOM" id="CLU_030231_0_0_0"/>
<dbReference type="PhylomeDB" id="Q5SH02"/>
<dbReference type="UniPathway" id="UPA00098">
    <property type="reaction ID" value="UER00360"/>
</dbReference>
<dbReference type="Proteomes" id="UP000000532">
    <property type="component" value="Chromosome"/>
</dbReference>
<dbReference type="GO" id="GO:0005737">
    <property type="term" value="C:cytoplasm"/>
    <property type="evidence" value="ECO:0007669"/>
    <property type="project" value="UniProtKB-SubCell"/>
</dbReference>
<dbReference type="GO" id="GO:0004350">
    <property type="term" value="F:glutamate-5-semialdehyde dehydrogenase activity"/>
    <property type="evidence" value="ECO:0007669"/>
    <property type="project" value="UniProtKB-UniRule"/>
</dbReference>
<dbReference type="GO" id="GO:0050661">
    <property type="term" value="F:NADP binding"/>
    <property type="evidence" value="ECO:0007669"/>
    <property type="project" value="InterPro"/>
</dbReference>
<dbReference type="GO" id="GO:0055129">
    <property type="term" value="P:L-proline biosynthetic process"/>
    <property type="evidence" value="ECO:0007669"/>
    <property type="project" value="UniProtKB-UniRule"/>
</dbReference>
<dbReference type="CDD" id="cd07079">
    <property type="entry name" value="ALDH_F18-19_ProA-GPR"/>
    <property type="match status" value="1"/>
</dbReference>
<dbReference type="FunFam" id="3.40.309.10:FF:000006">
    <property type="entry name" value="Gamma-glutamyl phosphate reductase"/>
    <property type="match status" value="1"/>
</dbReference>
<dbReference type="Gene3D" id="3.40.605.10">
    <property type="entry name" value="Aldehyde Dehydrogenase, Chain A, domain 1"/>
    <property type="match status" value="1"/>
</dbReference>
<dbReference type="Gene3D" id="3.40.309.10">
    <property type="entry name" value="Aldehyde Dehydrogenase, Chain A, domain 2"/>
    <property type="match status" value="1"/>
</dbReference>
<dbReference type="HAMAP" id="MF_00412">
    <property type="entry name" value="ProA"/>
    <property type="match status" value="1"/>
</dbReference>
<dbReference type="InterPro" id="IPR016161">
    <property type="entry name" value="Ald_DH/histidinol_DH"/>
</dbReference>
<dbReference type="InterPro" id="IPR016163">
    <property type="entry name" value="Ald_DH_C"/>
</dbReference>
<dbReference type="InterPro" id="IPR016162">
    <property type="entry name" value="Ald_DH_N"/>
</dbReference>
<dbReference type="InterPro" id="IPR015590">
    <property type="entry name" value="Aldehyde_DH_dom"/>
</dbReference>
<dbReference type="InterPro" id="IPR020593">
    <property type="entry name" value="G-glutamylP_reductase_CS"/>
</dbReference>
<dbReference type="InterPro" id="IPR012134">
    <property type="entry name" value="Glu-5-SA_DH"/>
</dbReference>
<dbReference type="InterPro" id="IPR000965">
    <property type="entry name" value="GPR_dom"/>
</dbReference>
<dbReference type="NCBIfam" id="NF001221">
    <property type="entry name" value="PRK00197.1"/>
    <property type="match status" value="1"/>
</dbReference>
<dbReference type="NCBIfam" id="TIGR00407">
    <property type="entry name" value="proA"/>
    <property type="match status" value="1"/>
</dbReference>
<dbReference type="PANTHER" id="PTHR11063:SF8">
    <property type="entry name" value="DELTA-1-PYRROLINE-5-CARBOXYLATE SYNTHASE"/>
    <property type="match status" value="1"/>
</dbReference>
<dbReference type="PANTHER" id="PTHR11063">
    <property type="entry name" value="GLUTAMATE SEMIALDEHYDE DEHYDROGENASE"/>
    <property type="match status" value="1"/>
</dbReference>
<dbReference type="Pfam" id="PF00171">
    <property type="entry name" value="Aldedh"/>
    <property type="match status" value="1"/>
</dbReference>
<dbReference type="PIRSF" id="PIRSF000151">
    <property type="entry name" value="GPR"/>
    <property type="match status" value="1"/>
</dbReference>
<dbReference type="SUPFAM" id="SSF53720">
    <property type="entry name" value="ALDH-like"/>
    <property type="match status" value="1"/>
</dbReference>
<dbReference type="PROSITE" id="PS01223">
    <property type="entry name" value="PROA"/>
    <property type="match status" value="1"/>
</dbReference>
<comment type="function">
    <text evidence="1">Catalyzes the NADPH-dependent reduction of L-glutamate 5-phosphate into L-glutamate 5-semialdehyde and phosphate. The product spontaneously undergoes cyclization to form 1-pyrroline-5-carboxylate.</text>
</comment>
<comment type="catalytic activity">
    <reaction evidence="1">
        <text>L-glutamate 5-semialdehyde + phosphate + NADP(+) = L-glutamyl 5-phosphate + NADPH + H(+)</text>
        <dbReference type="Rhea" id="RHEA:19541"/>
        <dbReference type="ChEBI" id="CHEBI:15378"/>
        <dbReference type="ChEBI" id="CHEBI:43474"/>
        <dbReference type="ChEBI" id="CHEBI:57783"/>
        <dbReference type="ChEBI" id="CHEBI:58066"/>
        <dbReference type="ChEBI" id="CHEBI:58274"/>
        <dbReference type="ChEBI" id="CHEBI:58349"/>
        <dbReference type="EC" id="1.2.1.41"/>
    </reaction>
</comment>
<comment type="pathway">
    <text evidence="1">Amino-acid biosynthesis; L-proline biosynthesis; L-glutamate 5-semialdehyde from L-glutamate: step 2/2.</text>
</comment>
<comment type="subcellular location">
    <subcellularLocation>
        <location evidence="1">Cytoplasm</location>
    </subcellularLocation>
</comment>
<comment type="similarity">
    <text evidence="1">Belongs to the gamma-glutamyl phosphate reductase family.</text>
</comment>
<reference key="1">
    <citation type="submission" date="2004-11" db="EMBL/GenBank/DDBJ databases">
        <title>Complete genome sequence of Thermus thermophilus HB8.</title>
        <authorList>
            <person name="Masui R."/>
            <person name="Kurokawa K."/>
            <person name="Nakagawa N."/>
            <person name="Tokunaga F."/>
            <person name="Koyama Y."/>
            <person name="Shibata T."/>
            <person name="Oshima T."/>
            <person name="Yokoyama S."/>
            <person name="Yasunaga T."/>
            <person name="Kuramitsu S."/>
        </authorList>
    </citation>
    <scope>NUCLEOTIDE SEQUENCE [LARGE SCALE GENOMIC DNA]</scope>
    <source>
        <strain>ATCC 27634 / DSM 579 / HB8</strain>
    </source>
</reference>
<organism>
    <name type="scientific">Thermus thermophilus (strain ATCC 27634 / DSM 579 / HB8)</name>
    <dbReference type="NCBI Taxonomy" id="300852"/>
    <lineage>
        <taxon>Bacteria</taxon>
        <taxon>Thermotogati</taxon>
        <taxon>Deinococcota</taxon>
        <taxon>Deinococci</taxon>
        <taxon>Thermales</taxon>
        <taxon>Thermaceae</taxon>
        <taxon>Thermus</taxon>
    </lineage>
</organism>
<sequence>MTATSLWELAERARKRLSEIAKGNRDRALLAMADLLEARWEEVLRANREDLEEAERTGLPKAKLDRLALKEKDLKTLTEGLRQIARLPDPLGRIEGLAKRPNGLRVGRMRVPLGLIGFIYEARPGATVEAVSVALKAGNAMLLRGGKEAFRSNRALVALWHEALGEAGLPEEAVTLVPTTDREAVLEMCRLELLDLLIPRGGEELIRLVQREARVPVLAHAKGVNHLYVDKKADLSMALRLALNGKTQRPAVCNALETVLVHEKVAEAFLPRLEKAMREKGVELRACPRALPLLKEAVPAREDEWDREYLDLVLRVKVVSGLEEALAHIARYGSRHTEAICTEDPKAAWRFLEEVDASLVLWNASTRFNDGFELGLGAEIGISTSKLHAYGPMGPMELTTLKWVALGEGQERT</sequence>
<feature type="chain" id="PRO_0000189804" description="Gamma-glutamyl phosphate reductase">
    <location>
        <begin position="1"/>
        <end position="413"/>
    </location>
</feature>
<gene>
    <name evidence="1" type="primary">proA</name>
    <name type="ordered locus">TTHA1928</name>
</gene>